<keyword id="KW-0025">Alternative splicing</keyword>
<keyword id="KW-0112">Calmodulin-binding</keyword>
<keyword id="KW-0114">cAMP</keyword>
<keyword id="KW-0116">cAMP-binding</keyword>
<keyword id="KW-1003">Cell membrane</keyword>
<keyword id="KW-0140">cGMP</keyword>
<keyword id="KW-0142">cGMP-binding</keyword>
<keyword id="KW-0407">Ion channel</keyword>
<keyword id="KW-0406">Ion transport</keyword>
<keyword id="KW-1071">Ligand-gated ion channel</keyword>
<keyword id="KW-0472">Membrane</keyword>
<keyword id="KW-0547">Nucleotide-binding</keyword>
<keyword id="KW-1185">Reference proteome</keyword>
<keyword id="KW-0812">Transmembrane</keyword>
<keyword id="KW-1133">Transmembrane helix</keyword>
<keyword id="KW-0813">Transport</keyword>
<reference key="1">
    <citation type="journal article" date="1999" name="Nature">
        <title>Sequence and analysis of chromosome 4 of the plant Arabidopsis thaliana.</title>
        <authorList>
            <person name="Mayer K.F.X."/>
            <person name="Schueller C."/>
            <person name="Wambutt R."/>
            <person name="Murphy G."/>
            <person name="Volckaert G."/>
            <person name="Pohl T."/>
            <person name="Duesterhoeft A."/>
            <person name="Stiekema W."/>
            <person name="Entian K.-D."/>
            <person name="Terryn N."/>
            <person name="Harris B."/>
            <person name="Ansorge W."/>
            <person name="Brandt P."/>
            <person name="Grivell L.A."/>
            <person name="Rieger M."/>
            <person name="Weichselgartner M."/>
            <person name="de Simone V."/>
            <person name="Obermaier B."/>
            <person name="Mache R."/>
            <person name="Mueller M."/>
            <person name="Kreis M."/>
            <person name="Delseny M."/>
            <person name="Puigdomenech P."/>
            <person name="Watson M."/>
            <person name="Schmidtheini T."/>
            <person name="Reichert B."/>
            <person name="Portetelle D."/>
            <person name="Perez-Alonso M."/>
            <person name="Boutry M."/>
            <person name="Bancroft I."/>
            <person name="Vos P."/>
            <person name="Hoheisel J."/>
            <person name="Zimmermann W."/>
            <person name="Wedler H."/>
            <person name="Ridley P."/>
            <person name="Langham S.-A."/>
            <person name="McCullagh B."/>
            <person name="Bilham L."/>
            <person name="Robben J."/>
            <person name="van der Schueren J."/>
            <person name="Grymonprez B."/>
            <person name="Chuang Y.-J."/>
            <person name="Vandenbussche F."/>
            <person name="Braeken M."/>
            <person name="Weltjens I."/>
            <person name="Voet M."/>
            <person name="Bastiaens I."/>
            <person name="Aert R."/>
            <person name="Defoor E."/>
            <person name="Weitzenegger T."/>
            <person name="Bothe G."/>
            <person name="Ramsperger U."/>
            <person name="Hilbert H."/>
            <person name="Braun M."/>
            <person name="Holzer E."/>
            <person name="Brandt A."/>
            <person name="Peters S."/>
            <person name="van Staveren M."/>
            <person name="Dirkse W."/>
            <person name="Mooijman P."/>
            <person name="Klein Lankhorst R."/>
            <person name="Rose M."/>
            <person name="Hauf J."/>
            <person name="Koetter P."/>
            <person name="Berneiser S."/>
            <person name="Hempel S."/>
            <person name="Feldpausch M."/>
            <person name="Lamberth S."/>
            <person name="Van den Daele H."/>
            <person name="De Keyser A."/>
            <person name="Buysshaert C."/>
            <person name="Gielen J."/>
            <person name="Villarroel R."/>
            <person name="De Clercq R."/>
            <person name="van Montagu M."/>
            <person name="Rogers J."/>
            <person name="Cronin A."/>
            <person name="Quail M.A."/>
            <person name="Bray-Allen S."/>
            <person name="Clark L."/>
            <person name="Doggett J."/>
            <person name="Hall S."/>
            <person name="Kay M."/>
            <person name="Lennard N."/>
            <person name="McLay K."/>
            <person name="Mayes R."/>
            <person name="Pettett A."/>
            <person name="Rajandream M.A."/>
            <person name="Lyne M."/>
            <person name="Benes V."/>
            <person name="Rechmann S."/>
            <person name="Borkova D."/>
            <person name="Bloecker H."/>
            <person name="Scharfe M."/>
            <person name="Grimm M."/>
            <person name="Loehnert T.-H."/>
            <person name="Dose S."/>
            <person name="de Haan M."/>
            <person name="Maarse A.C."/>
            <person name="Schaefer M."/>
            <person name="Mueller-Auer S."/>
            <person name="Gabel C."/>
            <person name="Fuchs M."/>
            <person name="Fartmann B."/>
            <person name="Granderath K."/>
            <person name="Dauner D."/>
            <person name="Herzl A."/>
            <person name="Neumann S."/>
            <person name="Argiriou A."/>
            <person name="Vitale D."/>
            <person name="Liguori R."/>
            <person name="Piravandi E."/>
            <person name="Massenet O."/>
            <person name="Quigley F."/>
            <person name="Clabauld G."/>
            <person name="Muendlein A."/>
            <person name="Felber R."/>
            <person name="Schnabl S."/>
            <person name="Hiller R."/>
            <person name="Schmidt W."/>
            <person name="Lecharny A."/>
            <person name="Aubourg S."/>
            <person name="Chefdor F."/>
            <person name="Cooke R."/>
            <person name="Berger C."/>
            <person name="Monfort A."/>
            <person name="Casacuberta E."/>
            <person name="Gibbons T."/>
            <person name="Weber N."/>
            <person name="Vandenbol M."/>
            <person name="Bargues M."/>
            <person name="Terol J."/>
            <person name="Torres A."/>
            <person name="Perez-Perez A."/>
            <person name="Purnelle B."/>
            <person name="Bent E."/>
            <person name="Johnson S."/>
            <person name="Tacon D."/>
            <person name="Jesse T."/>
            <person name="Heijnen L."/>
            <person name="Schwarz S."/>
            <person name="Scholler P."/>
            <person name="Heber S."/>
            <person name="Francs P."/>
            <person name="Bielke C."/>
            <person name="Frishman D."/>
            <person name="Haase D."/>
            <person name="Lemcke K."/>
            <person name="Mewes H.-W."/>
            <person name="Stocker S."/>
            <person name="Zaccaria P."/>
            <person name="Bevan M."/>
            <person name="Wilson R.K."/>
            <person name="de la Bastide M."/>
            <person name="Habermann K."/>
            <person name="Parnell L."/>
            <person name="Dedhia N."/>
            <person name="Gnoj L."/>
            <person name="Schutz K."/>
            <person name="Huang E."/>
            <person name="Spiegel L."/>
            <person name="Sekhon M."/>
            <person name="Murray J."/>
            <person name="Sheet P."/>
            <person name="Cordes M."/>
            <person name="Abu-Threideh J."/>
            <person name="Stoneking T."/>
            <person name="Kalicki J."/>
            <person name="Graves T."/>
            <person name="Harmon G."/>
            <person name="Edwards J."/>
            <person name="Latreille P."/>
            <person name="Courtney L."/>
            <person name="Cloud J."/>
            <person name="Abbott A."/>
            <person name="Scott K."/>
            <person name="Johnson D."/>
            <person name="Minx P."/>
            <person name="Bentley D."/>
            <person name="Fulton B."/>
            <person name="Miller N."/>
            <person name="Greco T."/>
            <person name="Kemp K."/>
            <person name="Kramer J."/>
            <person name="Fulton L."/>
            <person name="Mardis E."/>
            <person name="Dante M."/>
            <person name="Pepin K."/>
            <person name="Hillier L.W."/>
            <person name="Nelson J."/>
            <person name="Spieth J."/>
            <person name="Ryan E."/>
            <person name="Andrews S."/>
            <person name="Geisel C."/>
            <person name="Layman D."/>
            <person name="Du H."/>
            <person name="Ali J."/>
            <person name="Berghoff A."/>
            <person name="Jones K."/>
            <person name="Drone K."/>
            <person name="Cotton M."/>
            <person name="Joshu C."/>
            <person name="Antonoiu B."/>
            <person name="Zidanic M."/>
            <person name="Strong C."/>
            <person name="Sun H."/>
            <person name="Lamar B."/>
            <person name="Yordan C."/>
            <person name="Ma P."/>
            <person name="Zhong J."/>
            <person name="Preston R."/>
            <person name="Vil D."/>
            <person name="Shekher M."/>
            <person name="Matero A."/>
            <person name="Shah R."/>
            <person name="Swaby I.K."/>
            <person name="O'Shaughnessy A."/>
            <person name="Rodriguez M."/>
            <person name="Hoffman J."/>
            <person name="Till S."/>
            <person name="Granat S."/>
            <person name="Shohdy N."/>
            <person name="Hasegawa A."/>
            <person name="Hameed A."/>
            <person name="Lodhi M."/>
            <person name="Johnson A."/>
            <person name="Chen E."/>
            <person name="Marra M.A."/>
            <person name="Martienssen R."/>
            <person name="McCombie W.R."/>
        </authorList>
    </citation>
    <scope>NUCLEOTIDE SEQUENCE [LARGE SCALE GENOMIC DNA]</scope>
    <source>
        <strain>cv. Columbia</strain>
    </source>
</reference>
<reference key="2">
    <citation type="journal article" date="2017" name="Plant J.">
        <title>Araport11: a complete reannotation of the Arabidopsis thaliana reference genome.</title>
        <authorList>
            <person name="Cheng C.Y."/>
            <person name="Krishnakumar V."/>
            <person name="Chan A.P."/>
            <person name="Thibaud-Nissen F."/>
            <person name="Schobel S."/>
            <person name="Town C.D."/>
        </authorList>
    </citation>
    <scope>GENOME REANNOTATION</scope>
    <source>
        <strain>cv. Columbia</strain>
    </source>
</reference>
<reference key="3">
    <citation type="journal article" date="2001" name="Plant Physiol.">
        <title>Phylogenetic relationships within cation transporter families of Arabidopsis.</title>
        <authorList>
            <person name="Maeser P."/>
            <person name="Thomine S."/>
            <person name="Schroeder J.I."/>
            <person name="Ward J.M."/>
            <person name="Hirschi K."/>
            <person name="Sze H."/>
            <person name="Talke I.N."/>
            <person name="Amtmann A."/>
            <person name="Maathuis F.J.M."/>
            <person name="Sanders D."/>
            <person name="Harper J.F."/>
            <person name="Tchieu J."/>
            <person name="Gribskov M."/>
            <person name="Persans M.W."/>
            <person name="Salt D.E."/>
            <person name="Kim S.A."/>
            <person name="Guerinot M.L."/>
        </authorList>
    </citation>
    <scope>GENE FAMILY</scope>
    <scope>NOMENCLATURE</scope>
</reference>
<proteinExistence type="inferred from homology"/>
<feature type="chain" id="PRO_0000219337" description="Putative cyclic nucleotide-gated ion channel 9">
    <location>
        <begin position="1"/>
        <end position="733"/>
    </location>
</feature>
<feature type="topological domain" description="Cytoplasmic" evidence="2">
    <location>
        <begin position="1"/>
        <end position="117"/>
    </location>
</feature>
<feature type="transmembrane region" description="Helical; Name=H1" evidence="2">
    <location>
        <begin position="118"/>
        <end position="138"/>
    </location>
</feature>
<feature type="topological domain" description="Extracellular" evidence="2">
    <location>
        <begin position="139"/>
        <end position="151"/>
    </location>
</feature>
<feature type="transmembrane region" description="Helical; Name=H2" evidence="2">
    <location>
        <begin position="152"/>
        <end position="172"/>
    </location>
</feature>
<feature type="topological domain" description="Cytoplasmic" evidence="2">
    <location>
        <begin position="173"/>
        <end position="207"/>
    </location>
</feature>
<feature type="transmembrane region" description="Helical; Name=H3" evidence="2">
    <location>
        <begin position="208"/>
        <end position="228"/>
    </location>
</feature>
<feature type="topological domain" description="Extracellular" evidence="2">
    <location>
        <begin position="229"/>
        <end position="239"/>
    </location>
</feature>
<feature type="transmembrane region" description="Helical; Name=H4" evidence="2">
    <location>
        <begin position="240"/>
        <end position="260"/>
    </location>
</feature>
<feature type="topological domain" description="Cytoplasmic" evidence="2">
    <location>
        <begin position="261"/>
        <end position="280"/>
    </location>
</feature>
<feature type="transmembrane region" description="Helical; Name=H5" evidence="2">
    <location>
        <begin position="281"/>
        <end position="301"/>
    </location>
</feature>
<feature type="topological domain" description="Extracellular" evidence="2">
    <location>
        <begin position="302"/>
        <end position="406"/>
    </location>
</feature>
<feature type="transmembrane region" description="Helical; Name=H6" evidence="2">
    <location>
        <begin position="407"/>
        <end position="427"/>
    </location>
</feature>
<feature type="topological domain" description="Cytoplasmic" evidence="2">
    <location>
        <begin position="428"/>
        <end position="733"/>
    </location>
</feature>
<feature type="domain" description="IQ" evidence="3">
    <location>
        <begin position="649"/>
        <end position="678"/>
    </location>
</feature>
<feature type="region of interest" description="Calmodulin-binding" evidence="1">
    <location>
        <begin position="629"/>
        <end position="644"/>
    </location>
</feature>
<feature type="binding site">
    <location>
        <begin position="513"/>
        <end position="637"/>
    </location>
    <ligand>
        <name>a nucleoside 3',5'-cyclic phosphate</name>
        <dbReference type="ChEBI" id="CHEBI:58464"/>
    </ligand>
</feature>
<feature type="binding site" evidence="1">
    <location>
        <position position="584"/>
    </location>
    <ligand>
        <name>a nucleoside 3',5'-cyclic phosphate</name>
        <dbReference type="ChEBI" id="CHEBI:58464"/>
    </ligand>
</feature>
<gene>
    <name type="primary">CNGC9</name>
    <name type="ordered locus">At4g30560</name>
    <name type="ORF">F17I23.100</name>
</gene>
<accession>Q9M0A4</accession>
<name>CNGC9_ARATH</name>
<sequence>MLDCGKKAVKSQVISGRLEKFVRLDSMDSRYSQTSDTGLNRCTLNLQGPTRGGGAQGNNVSSGSFKKGFRKGSKGLWSIGRSIGLGVSRAVFPEDLKVSEKKIFDPQDKFLLLCNKLFVTSCILAVSVDPLFLYLPFVKDNEKCIGIDRKLAIIATTLRTVIDAFYLFHMALRFRTAFVAPSSRVFGRGELVIDPAQIAKRYLQQYFIIDFLSVLPLPQIVVWRFLYISKGASVLATKRALRSIILVQYIPRFIRLYPLSSELKRTAGVFAETAWAGAAYYLLLYMLASHIVGAIWYLLALERYNGCWTKVCSNSSLDCHRNFLFCGNEKMDGYAAWTTIKDSVLQLNCPVNTTDNPPFDFGIYLRALSSGIVSSKSFVSKYFFCLWWGLQNLSTLGQGLETSTYPGEVIFSIALAIAGLLLFALLIGNMQTYLQSLTIRLEEMRVKRRDSEQWMHHRMLPPELRERVRRYDQYKWLETRGVDEENLVQNLPKDLRRDIKRHLCLALVRRVPLFENMDERLLDAICERLKPCLYTESSYLVREGDPVNEMLFIIRGRLESVTTDGGRSGFFNRSLLKEGDFCGEELLTWALDPKSGSNLPSSTRTAKALTEVEAFALIADELKFVASQFRRLHSRQVQHTFRFYSQQWRTWAAIFIQAAWRRYVKKKKLEQLRKEEEEGEGSVTSIRATFLASKFAANALRKVHKNRIEAKSTIELVKYQKPSEPDFSADDTS</sequence>
<evidence type="ECO:0000250" key="1"/>
<evidence type="ECO:0000255" key="2"/>
<evidence type="ECO:0000255" key="3">
    <source>
        <dbReference type="PROSITE-ProRule" id="PRU00116"/>
    </source>
</evidence>
<evidence type="ECO:0000305" key="4"/>
<comment type="function">
    <text>Putative cyclic nucleotide-gated ion channel.</text>
</comment>
<comment type="subunit">
    <text evidence="4">Homotetramer or heterotetramer.</text>
</comment>
<comment type="subcellular location">
    <subcellularLocation>
        <location evidence="4">Cell membrane</location>
        <topology evidence="4">Multi-pass membrane protein</topology>
    </subcellularLocation>
</comment>
<comment type="alternative products">
    <event type="alternative splicing"/>
    <isoform>
        <id>Q9M0A4-1</id>
        <name>1</name>
        <sequence type="displayed"/>
    </isoform>
    <text>A number of isoforms are produced. According to EST sequences.</text>
</comment>
<comment type="domain">
    <text evidence="1">The binding of calmodulin to the C-terminus might interfere with cyclic nucleotide binding and thus channel activation.</text>
</comment>
<comment type="similarity">
    <text evidence="4">Belongs to the cyclic nucleotide-gated cation channel (TC 1.A.1.5) family.</text>
</comment>
<organism>
    <name type="scientific">Arabidopsis thaliana</name>
    <name type="common">Mouse-ear cress</name>
    <dbReference type="NCBI Taxonomy" id="3702"/>
    <lineage>
        <taxon>Eukaryota</taxon>
        <taxon>Viridiplantae</taxon>
        <taxon>Streptophyta</taxon>
        <taxon>Embryophyta</taxon>
        <taxon>Tracheophyta</taxon>
        <taxon>Spermatophyta</taxon>
        <taxon>Magnoliopsida</taxon>
        <taxon>eudicotyledons</taxon>
        <taxon>Gunneridae</taxon>
        <taxon>Pentapetalae</taxon>
        <taxon>rosids</taxon>
        <taxon>malvids</taxon>
        <taxon>Brassicales</taxon>
        <taxon>Brassicaceae</taxon>
        <taxon>Camelineae</taxon>
        <taxon>Arabidopsis</taxon>
    </lineage>
</organism>
<dbReference type="EMBL" id="AL161577">
    <property type="protein sequence ID" value="CAB79774.1"/>
    <property type="molecule type" value="Genomic_DNA"/>
</dbReference>
<dbReference type="EMBL" id="CP002687">
    <property type="protein sequence ID" value="AEE85780.1"/>
    <property type="molecule type" value="Genomic_DNA"/>
</dbReference>
<dbReference type="EMBL" id="CP002687">
    <property type="protein sequence ID" value="ANM68123.1"/>
    <property type="molecule type" value="Genomic_DNA"/>
</dbReference>
<dbReference type="PIR" id="E85357">
    <property type="entry name" value="E85357"/>
</dbReference>
<dbReference type="RefSeq" id="NP_001329900.1">
    <molecule id="Q9M0A4-1"/>
    <property type="nucleotide sequence ID" value="NM_001342013.1"/>
</dbReference>
<dbReference type="RefSeq" id="NP_194785.1">
    <molecule id="Q9M0A4-1"/>
    <property type="nucleotide sequence ID" value="NM_119202.4"/>
</dbReference>
<dbReference type="BioGRID" id="14466">
    <property type="interactions" value="25"/>
</dbReference>
<dbReference type="FunCoup" id="Q9M0A4">
    <property type="interactions" value="207"/>
</dbReference>
<dbReference type="IntAct" id="Q9M0A4">
    <property type="interactions" value="23"/>
</dbReference>
<dbReference type="STRING" id="3702.Q9M0A4"/>
<dbReference type="iPTMnet" id="Q9M0A4"/>
<dbReference type="PaxDb" id="3702-AT4G30560.1"/>
<dbReference type="ProteomicsDB" id="220395">
    <molecule id="Q9M0A4-1"/>
</dbReference>
<dbReference type="EnsemblPlants" id="AT4G30560.1">
    <molecule id="Q9M0A4-1"/>
    <property type="protein sequence ID" value="AT4G30560.1"/>
    <property type="gene ID" value="AT4G30560"/>
</dbReference>
<dbReference type="EnsemblPlants" id="AT4G30560.4">
    <molecule id="Q9M0A4-1"/>
    <property type="protein sequence ID" value="AT4G30560.4"/>
    <property type="gene ID" value="AT4G30560"/>
</dbReference>
<dbReference type="GeneID" id="829179"/>
<dbReference type="Gramene" id="AT4G30560.1">
    <molecule id="Q9M0A4-1"/>
    <property type="protein sequence ID" value="AT4G30560.1"/>
    <property type="gene ID" value="AT4G30560"/>
</dbReference>
<dbReference type="Gramene" id="AT4G30560.4">
    <molecule id="Q9M0A4-1"/>
    <property type="protein sequence ID" value="AT4G30560.4"/>
    <property type="gene ID" value="AT4G30560"/>
</dbReference>
<dbReference type="KEGG" id="ath:AT4G30560"/>
<dbReference type="Araport" id="AT4G30560"/>
<dbReference type="TAIR" id="AT4G30560">
    <property type="gene designation" value="CNGC9"/>
</dbReference>
<dbReference type="eggNOG" id="KOG0498">
    <property type="taxonomic scope" value="Eukaryota"/>
</dbReference>
<dbReference type="InParanoid" id="Q9M0A4"/>
<dbReference type="OrthoDB" id="421226at2759"/>
<dbReference type="PhylomeDB" id="Q9M0A4"/>
<dbReference type="PRO" id="PR:Q9M0A4"/>
<dbReference type="Proteomes" id="UP000006548">
    <property type="component" value="Chromosome 4"/>
</dbReference>
<dbReference type="ExpressionAtlas" id="Q9M0A4">
    <property type="expression patterns" value="baseline and differential"/>
</dbReference>
<dbReference type="GO" id="GO:0005886">
    <property type="term" value="C:plasma membrane"/>
    <property type="evidence" value="ECO:0007669"/>
    <property type="project" value="UniProtKB-SubCell"/>
</dbReference>
<dbReference type="GO" id="GO:0005262">
    <property type="term" value="F:calcium channel activity"/>
    <property type="evidence" value="ECO:0000314"/>
    <property type="project" value="TAIR"/>
</dbReference>
<dbReference type="GO" id="GO:0005516">
    <property type="term" value="F:calmodulin binding"/>
    <property type="evidence" value="ECO:0007669"/>
    <property type="project" value="UniProtKB-KW"/>
</dbReference>
<dbReference type="GO" id="GO:0030552">
    <property type="term" value="F:cAMP binding"/>
    <property type="evidence" value="ECO:0007669"/>
    <property type="project" value="UniProtKB-KW"/>
</dbReference>
<dbReference type="GO" id="GO:0030553">
    <property type="term" value="F:cGMP binding"/>
    <property type="evidence" value="ECO:0007669"/>
    <property type="project" value="UniProtKB-KW"/>
</dbReference>
<dbReference type="GO" id="GO:0005249">
    <property type="term" value="F:voltage-gated potassium channel activity"/>
    <property type="evidence" value="ECO:0007669"/>
    <property type="project" value="InterPro"/>
</dbReference>
<dbReference type="CDD" id="cd00038">
    <property type="entry name" value="CAP_ED"/>
    <property type="match status" value="1"/>
</dbReference>
<dbReference type="CDD" id="cd23767">
    <property type="entry name" value="IQCD"/>
    <property type="match status" value="1"/>
</dbReference>
<dbReference type="FunFam" id="1.10.287.630:FF:000003">
    <property type="entry name" value="Cyclic nucleotide-gated ion channel 1"/>
    <property type="match status" value="1"/>
</dbReference>
<dbReference type="FunFam" id="2.60.120.10:FF:000024">
    <property type="entry name" value="Cyclic nucleotide-gated ion channel 1"/>
    <property type="match status" value="1"/>
</dbReference>
<dbReference type="Gene3D" id="1.10.287.70">
    <property type="match status" value="1"/>
</dbReference>
<dbReference type="Gene3D" id="1.10.287.630">
    <property type="entry name" value="Helix hairpin bin"/>
    <property type="match status" value="1"/>
</dbReference>
<dbReference type="Gene3D" id="2.60.120.10">
    <property type="entry name" value="Jelly Rolls"/>
    <property type="match status" value="1"/>
</dbReference>
<dbReference type="InterPro" id="IPR000595">
    <property type="entry name" value="cNMP-bd_dom"/>
</dbReference>
<dbReference type="InterPro" id="IPR018490">
    <property type="entry name" value="cNMP-bd_dom_sf"/>
</dbReference>
<dbReference type="InterPro" id="IPR005821">
    <property type="entry name" value="Ion_trans_dom"/>
</dbReference>
<dbReference type="InterPro" id="IPR003938">
    <property type="entry name" value="K_chnl_volt-dep_EAG/ELK/ERG"/>
</dbReference>
<dbReference type="InterPro" id="IPR014710">
    <property type="entry name" value="RmlC-like_jellyroll"/>
</dbReference>
<dbReference type="PANTHER" id="PTHR45651">
    <property type="entry name" value="CYCLIC NUCLEOTIDE-GATED ION CHANNEL 15-RELATED-RELATED"/>
    <property type="match status" value="1"/>
</dbReference>
<dbReference type="PANTHER" id="PTHR45651:SF57">
    <property type="entry name" value="CYCLIC NUCLEOTIDE-GATED ION CHANNEL 9-RELATED"/>
    <property type="match status" value="1"/>
</dbReference>
<dbReference type="Pfam" id="PF00027">
    <property type="entry name" value="cNMP_binding"/>
    <property type="match status" value="1"/>
</dbReference>
<dbReference type="Pfam" id="PF00520">
    <property type="entry name" value="Ion_trans"/>
    <property type="match status" value="1"/>
</dbReference>
<dbReference type="PRINTS" id="PR01463">
    <property type="entry name" value="EAGCHANLFMLY"/>
</dbReference>
<dbReference type="SMART" id="SM00100">
    <property type="entry name" value="cNMP"/>
    <property type="match status" value="1"/>
</dbReference>
<dbReference type="SUPFAM" id="SSF51206">
    <property type="entry name" value="cAMP-binding domain-like"/>
    <property type="match status" value="1"/>
</dbReference>
<dbReference type="SUPFAM" id="SSF81324">
    <property type="entry name" value="Voltage-gated potassium channels"/>
    <property type="match status" value="1"/>
</dbReference>
<dbReference type="PROSITE" id="PS50042">
    <property type="entry name" value="CNMP_BINDING_3"/>
    <property type="match status" value="1"/>
</dbReference>
<dbReference type="PROSITE" id="PS50096">
    <property type="entry name" value="IQ"/>
    <property type="match status" value="1"/>
</dbReference>
<protein>
    <recommendedName>
        <fullName>Putative cyclic nucleotide-gated ion channel 9</fullName>
    </recommendedName>
    <alternativeName>
        <fullName>Cyclic nucleotide- and calmodulin-regulated ion channel 9</fullName>
    </alternativeName>
</protein>